<proteinExistence type="inferred from homology"/>
<evidence type="ECO:0000255" key="1">
    <source>
        <dbReference type="HAMAP-Rule" id="MF_00823"/>
    </source>
</evidence>
<evidence type="ECO:0000255" key="2">
    <source>
        <dbReference type="PROSITE-ProRule" id="PRU01137"/>
    </source>
</evidence>
<reference key="1">
    <citation type="journal article" date="2009" name="PLoS Genet.">
        <title>Organised genome dynamics in the Escherichia coli species results in highly diverse adaptive paths.</title>
        <authorList>
            <person name="Touchon M."/>
            <person name="Hoede C."/>
            <person name="Tenaillon O."/>
            <person name="Barbe V."/>
            <person name="Baeriswyl S."/>
            <person name="Bidet P."/>
            <person name="Bingen E."/>
            <person name="Bonacorsi S."/>
            <person name="Bouchier C."/>
            <person name="Bouvet O."/>
            <person name="Calteau A."/>
            <person name="Chiapello H."/>
            <person name="Clermont O."/>
            <person name="Cruveiller S."/>
            <person name="Danchin A."/>
            <person name="Diard M."/>
            <person name="Dossat C."/>
            <person name="Karoui M.E."/>
            <person name="Frapy E."/>
            <person name="Garry L."/>
            <person name="Ghigo J.M."/>
            <person name="Gilles A.M."/>
            <person name="Johnson J."/>
            <person name="Le Bouguenec C."/>
            <person name="Lescat M."/>
            <person name="Mangenot S."/>
            <person name="Martinez-Jehanne V."/>
            <person name="Matic I."/>
            <person name="Nassif X."/>
            <person name="Oztas S."/>
            <person name="Petit M.A."/>
            <person name="Pichon C."/>
            <person name="Rouy Z."/>
            <person name="Ruf C.S."/>
            <person name="Schneider D."/>
            <person name="Tourret J."/>
            <person name="Vacherie B."/>
            <person name="Vallenet D."/>
            <person name="Medigue C."/>
            <person name="Rocha E.P.C."/>
            <person name="Denamur E."/>
        </authorList>
    </citation>
    <scope>NUCLEOTIDE SEQUENCE [LARGE SCALE GENOMIC DNA]</scope>
    <source>
        <strain>IAI1</strain>
    </source>
</reference>
<protein>
    <recommendedName>
        <fullName evidence="1">Acetyl-coenzyme A carboxylase carboxyl transferase subunit alpha</fullName>
        <shortName evidence="1">ACCase subunit alpha</shortName>
        <shortName evidence="1">Acetyl-CoA carboxylase carboxyltransferase subunit alpha</shortName>
        <ecNumber evidence="1">2.1.3.15</ecNumber>
    </recommendedName>
</protein>
<keyword id="KW-0067">ATP-binding</keyword>
<keyword id="KW-0963">Cytoplasm</keyword>
<keyword id="KW-0275">Fatty acid biosynthesis</keyword>
<keyword id="KW-0276">Fatty acid metabolism</keyword>
<keyword id="KW-0444">Lipid biosynthesis</keyword>
<keyword id="KW-0443">Lipid metabolism</keyword>
<keyword id="KW-0547">Nucleotide-binding</keyword>
<keyword id="KW-0808">Transferase</keyword>
<feature type="chain" id="PRO_1000134485" description="Acetyl-coenzyme A carboxylase carboxyl transferase subunit alpha">
    <location>
        <begin position="1"/>
        <end position="319"/>
    </location>
</feature>
<feature type="domain" description="CoA carboxyltransferase C-terminal" evidence="2">
    <location>
        <begin position="35"/>
        <end position="296"/>
    </location>
</feature>
<organism>
    <name type="scientific">Escherichia coli O8 (strain IAI1)</name>
    <dbReference type="NCBI Taxonomy" id="585034"/>
    <lineage>
        <taxon>Bacteria</taxon>
        <taxon>Pseudomonadati</taxon>
        <taxon>Pseudomonadota</taxon>
        <taxon>Gammaproteobacteria</taxon>
        <taxon>Enterobacterales</taxon>
        <taxon>Enterobacteriaceae</taxon>
        <taxon>Escherichia</taxon>
    </lineage>
</organism>
<name>ACCA_ECO8A</name>
<sequence>MSLNFLDFEQPIAELEAKIDSLTAVSRQDEKLDINIDEEVHRLREKSVELTRKIFADLGAWQIAQLARHPQRPYTLDYVRLAFDEFDELAGDRAYADDKAIVGGIARLDGRPVMIIGHQKGRETKEKIRRNFGMPAPEGYRKALRLMQMAERFKMPIITFIDTPGAYPGVGAEERGQSEAIARNLREMSRLGVPVVCTVIGEGGSGGALAIGVGDKVNMLQYSTYSVISPEGCASILWKSADKAPLAAEAMGIIAPRLKELKLIDSIIPEPLGGAHRNPEAMAASLKAQLLADLADLDVLSTEDLKNRRYQRLMSYGYA</sequence>
<dbReference type="EC" id="2.1.3.15" evidence="1"/>
<dbReference type="EMBL" id="CU928160">
    <property type="protein sequence ID" value="CAQ97072.1"/>
    <property type="molecule type" value="Genomic_DNA"/>
</dbReference>
<dbReference type="RefSeq" id="WP_000055741.1">
    <property type="nucleotide sequence ID" value="NC_011741.1"/>
</dbReference>
<dbReference type="SMR" id="B7M1Y8"/>
<dbReference type="GeneID" id="86945115"/>
<dbReference type="KEGG" id="ecr:ECIAI1_0185"/>
<dbReference type="HOGENOM" id="CLU_015486_0_2_6"/>
<dbReference type="UniPathway" id="UPA00655">
    <property type="reaction ID" value="UER00711"/>
</dbReference>
<dbReference type="GO" id="GO:0009317">
    <property type="term" value="C:acetyl-CoA carboxylase complex"/>
    <property type="evidence" value="ECO:0007669"/>
    <property type="project" value="InterPro"/>
</dbReference>
<dbReference type="GO" id="GO:0003989">
    <property type="term" value="F:acetyl-CoA carboxylase activity"/>
    <property type="evidence" value="ECO:0007669"/>
    <property type="project" value="InterPro"/>
</dbReference>
<dbReference type="GO" id="GO:0005524">
    <property type="term" value="F:ATP binding"/>
    <property type="evidence" value="ECO:0007669"/>
    <property type="project" value="UniProtKB-KW"/>
</dbReference>
<dbReference type="GO" id="GO:0016743">
    <property type="term" value="F:carboxyl- or carbamoyltransferase activity"/>
    <property type="evidence" value="ECO:0007669"/>
    <property type="project" value="UniProtKB-UniRule"/>
</dbReference>
<dbReference type="GO" id="GO:0006633">
    <property type="term" value="P:fatty acid biosynthetic process"/>
    <property type="evidence" value="ECO:0007669"/>
    <property type="project" value="UniProtKB-KW"/>
</dbReference>
<dbReference type="GO" id="GO:2001295">
    <property type="term" value="P:malonyl-CoA biosynthetic process"/>
    <property type="evidence" value="ECO:0007669"/>
    <property type="project" value="UniProtKB-UniRule"/>
</dbReference>
<dbReference type="FunFam" id="3.90.226.10:FF:000008">
    <property type="entry name" value="Acetyl-coenzyme A carboxylase carboxyl transferase subunit alpha"/>
    <property type="match status" value="1"/>
</dbReference>
<dbReference type="Gene3D" id="3.90.226.10">
    <property type="entry name" value="2-enoyl-CoA Hydratase, Chain A, domain 1"/>
    <property type="match status" value="1"/>
</dbReference>
<dbReference type="HAMAP" id="MF_00823">
    <property type="entry name" value="AcetylCoA_CT_alpha"/>
    <property type="match status" value="1"/>
</dbReference>
<dbReference type="InterPro" id="IPR001095">
    <property type="entry name" value="Acetyl_CoA_COase_a_su"/>
</dbReference>
<dbReference type="InterPro" id="IPR029045">
    <property type="entry name" value="ClpP/crotonase-like_dom_sf"/>
</dbReference>
<dbReference type="InterPro" id="IPR011763">
    <property type="entry name" value="COA_CT_C"/>
</dbReference>
<dbReference type="NCBIfam" id="TIGR00513">
    <property type="entry name" value="accA"/>
    <property type="match status" value="1"/>
</dbReference>
<dbReference type="NCBIfam" id="NF041504">
    <property type="entry name" value="AccA_sub"/>
    <property type="match status" value="1"/>
</dbReference>
<dbReference type="NCBIfam" id="NF004344">
    <property type="entry name" value="PRK05724.1"/>
    <property type="match status" value="1"/>
</dbReference>
<dbReference type="PANTHER" id="PTHR42853">
    <property type="entry name" value="ACETYL-COENZYME A CARBOXYLASE CARBOXYL TRANSFERASE SUBUNIT ALPHA"/>
    <property type="match status" value="1"/>
</dbReference>
<dbReference type="PANTHER" id="PTHR42853:SF3">
    <property type="entry name" value="ACETYL-COENZYME A CARBOXYLASE CARBOXYL TRANSFERASE SUBUNIT ALPHA, CHLOROPLASTIC"/>
    <property type="match status" value="1"/>
</dbReference>
<dbReference type="Pfam" id="PF03255">
    <property type="entry name" value="ACCA"/>
    <property type="match status" value="1"/>
</dbReference>
<dbReference type="PRINTS" id="PR01069">
    <property type="entry name" value="ACCCTRFRASEA"/>
</dbReference>
<dbReference type="SUPFAM" id="SSF52096">
    <property type="entry name" value="ClpP/crotonase"/>
    <property type="match status" value="1"/>
</dbReference>
<dbReference type="PROSITE" id="PS50989">
    <property type="entry name" value="COA_CT_CTER"/>
    <property type="match status" value="1"/>
</dbReference>
<comment type="function">
    <text evidence="1">Component of the acetyl coenzyme A carboxylase (ACC) complex. First, biotin carboxylase catalyzes the carboxylation of biotin on its carrier protein (BCCP) and then the CO(2) group is transferred by the carboxyltransferase to acetyl-CoA to form malonyl-CoA.</text>
</comment>
<comment type="catalytic activity">
    <reaction evidence="1">
        <text>N(6)-carboxybiotinyl-L-lysyl-[protein] + acetyl-CoA = N(6)-biotinyl-L-lysyl-[protein] + malonyl-CoA</text>
        <dbReference type="Rhea" id="RHEA:54728"/>
        <dbReference type="Rhea" id="RHEA-COMP:10505"/>
        <dbReference type="Rhea" id="RHEA-COMP:10506"/>
        <dbReference type="ChEBI" id="CHEBI:57288"/>
        <dbReference type="ChEBI" id="CHEBI:57384"/>
        <dbReference type="ChEBI" id="CHEBI:83144"/>
        <dbReference type="ChEBI" id="CHEBI:83145"/>
        <dbReference type="EC" id="2.1.3.15"/>
    </reaction>
</comment>
<comment type="pathway">
    <text evidence="1">Lipid metabolism; malonyl-CoA biosynthesis; malonyl-CoA from acetyl-CoA: step 1/1.</text>
</comment>
<comment type="subunit">
    <text evidence="1">Acetyl-CoA carboxylase is a heterohexamer composed of biotin carboxyl carrier protein (AccB), biotin carboxylase (AccC) and two subunits each of ACCase subunit alpha (AccA) and ACCase subunit beta (AccD).</text>
</comment>
<comment type="subcellular location">
    <subcellularLocation>
        <location evidence="1">Cytoplasm</location>
    </subcellularLocation>
</comment>
<comment type="similarity">
    <text evidence="1">Belongs to the AccA family.</text>
</comment>
<gene>
    <name evidence="1" type="primary">accA</name>
    <name type="ordered locus">ECIAI1_0185</name>
</gene>
<accession>B7M1Y8</accession>